<gene>
    <name evidence="1" type="primary">dnaG</name>
    <name type="synonym">dnaP</name>
    <name type="synonym">parB</name>
    <name type="ordered locus">b3066</name>
    <name type="ordered locus">JW3038</name>
</gene>
<evidence type="ECO:0000255" key="1">
    <source>
        <dbReference type="HAMAP-Rule" id="MF_00974"/>
    </source>
</evidence>
<evidence type="ECO:0000269" key="2">
    <source>
    </source>
</evidence>
<evidence type="ECO:0000269" key="3">
    <source>
    </source>
</evidence>
<evidence type="ECO:0000269" key="4">
    <source>
    </source>
</evidence>
<evidence type="ECO:0000269" key="5">
    <source>
    </source>
</evidence>
<evidence type="ECO:0000269" key="6">
    <source>
    </source>
</evidence>
<evidence type="ECO:0000269" key="7">
    <source>
    </source>
</evidence>
<evidence type="ECO:0000269" key="8">
    <source>
    </source>
</evidence>
<evidence type="ECO:0000269" key="9">
    <source>
    </source>
</evidence>
<evidence type="ECO:0000269" key="10">
    <source>
    </source>
</evidence>
<evidence type="ECO:0000269" key="11">
    <source>
    </source>
</evidence>
<evidence type="ECO:0000269" key="12">
    <source>
    </source>
</evidence>
<evidence type="ECO:0000305" key="13"/>
<evidence type="ECO:0007744" key="14">
    <source>
        <dbReference type="PDB" id="1DD9"/>
    </source>
</evidence>
<evidence type="ECO:0007744" key="15">
    <source>
        <dbReference type="PDB" id="1DDE"/>
    </source>
</evidence>
<evidence type="ECO:0007744" key="16">
    <source>
        <dbReference type="PDB" id="1EQN"/>
    </source>
</evidence>
<evidence type="ECO:0007744" key="17">
    <source>
        <dbReference type="PDB" id="1T3W"/>
    </source>
</evidence>
<evidence type="ECO:0007744" key="18">
    <source>
        <dbReference type="PDB" id="2HAJ"/>
    </source>
</evidence>
<evidence type="ECO:0007744" key="19">
    <source>
        <dbReference type="PDB" id="3B39"/>
    </source>
</evidence>
<evidence type="ECO:0007744" key="20">
    <source>
        <dbReference type="PDB" id="6CBR"/>
    </source>
</evidence>
<evidence type="ECO:0007744" key="21">
    <source>
        <dbReference type="PDB" id="6CBS"/>
    </source>
</evidence>
<evidence type="ECO:0007744" key="22">
    <source>
        <dbReference type="PDB" id="6CBT"/>
    </source>
</evidence>
<evidence type="ECO:0007829" key="23">
    <source>
        <dbReference type="PDB" id="1DD9"/>
    </source>
</evidence>
<evidence type="ECO:0007829" key="24">
    <source>
        <dbReference type="PDB" id="1DDE"/>
    </source>
</evidence>
<evidence type="ECO:0007829" key="25">
    <source>
        <dbReference type="PDB" id="1EQN"/>
    </source>
</evidence>
<evidence type="ECO:0007829" key="26">
    <source>
        <dbReference type="PDB" id="1T3W"/>
    </source>
</evidence>
<evidence type="ECO:0007829" key="27">
    <source>
        <dbReference type="PDB" id="2HAJ"/>
    </source>
</evidence>
<evidence type="ECO:0007829" key="28">
    <source>
        <dbReference type="PDB" id="6CBR"/>
    </source>
</evidence>
<evidence type="ECO:0007829" key="29">
    <source>
        <dbReference type="PDB" id="6CBS"/>
    </source>
</evidence>
<accession>P0ABS5</accession>
<accession>P02922</accession>
<accession>P02923</accession>
<accession>Q2M9D9</accession>
<accession>Q47613</accession>
<feature type="chain" id="PRO_0000180490" description="DNA primase">
    <location>
        <begin position="1"/>
        <end position="581"/>
    </location>
</feature>
<feature type="domain" description="Toprim" evidence="1">
    <location>
        <begin position="259"/>
        <end position="341"/>
    </location>
</feature>
<feature type="zinc finger region" description="CHC2-type" evidence="1">
    <location>
        <begin position="40"/>
        <end position="64"/>
    </location>
</feature>
<feature type="binding site" evidence="1">
    <location>
        <position position="265"/>
    </location>
    <ligand>
        <name>Mg(2+)</name>
        <dbReference type="ChEBI" id="CHEBI:18420"/>
        <label>1</label>
        <note>catalytic</note>
    </ligand>
</feature>
<feature type="binding site" evidence="1">
    <location>
        <position position="309"/>
    </location>
    <ligand>
        <name>Mg(2+)</name>
        <dbReference type="ChEBI" id="CHEBI:18420"/>
        <label>1</label>
        <note>catalytic</note>
    </ligand>
</feature>
<feature type="binding site" evidence="1">
    <location>
        <position position="309"/>
    </location>
    <ligand>
        <name>Mg(2+)</name>
        <dbReference type="ChEBI" id="CHEBI:18420"/>
        <label>2</label>
    </ligand>
</feature>
<feature type="binding site" evidence="1">
    <location>
        <position position="311"/>
    </location>
    <ligand>
        <name>Mg(2+)</name>
        <dbReference type="ChEBI" id="CHEBI:18420"/>
        <label>2</label>
    </ligand>
</feature>
<feature type="mutagenesis site" description="Abolishes DNA-binding and primer synthesis." evidence="8">
    <original>W</original>
    <variation>A</variation>
    <location>
        <position position="165"/>
    </location>
</feature>
<feature type="mutagenesis site" description="Abolishes primer synthesis but can still bind DNA. Abolishes DNA-binding; when associated with A-201." evidence="8">
    <original>R</original>
    <variation>A</variation>
    <location>
        <position position="199"/>
    </location>
</feature>
<feature type="mutagenesis site" description="Abolishes primer synthesis but can still bind DNA. Abolishes DNA-binding; when associated with A-199." evidence="8">
    <original>R</original>
    <variation>A</variation>
    <location>
        <position position="201"/>
    </location>
</feature>
<feature type="mutagenesis site" description="Decreases interaction with DnaB and primase activity." evidence="12">
    <original>Q</original>
    <variation>A</variation>
    <location>
        <position position="576"/>
    </location>
</feature>
<feature type="sequence conflict" description="In Ref. 5; CAA23636." evidence="13" ref="5">
    <original>D</original>
    <variation>N</variation>
    <location>
        <position position="24"/>
    </location>
</feature>
<feature type="helix" evidence="23">
    <location>
        <begin position="116"/>
        <end position="131"/>
    </location>
</feature>
<feature type="helix" evidence="23">
    <location>
        <begin position="134"/>
        <end position="136"/>
    </location>
</feature>
<feature type="helix" evidence="23">
    <location>
        <begin position="137"/>
        <end position="145"/>
    </location>
</feature>
<feature type="helix" evidence="23">
    <location>
        <begin position="150"/>
        <end position="156"/>
    </location>
</feature>
<feature type="strand" evidence="23">
    <location>
        <begin position="159"/>
        <end position="161"/>
    </location>
</feature>
<feature type="strand" evidence="23">
    <location>
        <begin position="163"/>
        <end position="165"/>
    </location>
</feature>
<feature type="helix" evidence="23">
    <location>
        <begin position="167"/>
        <end position="172"/>
    </location>
</feature>
<feature type="helix" evidence="23">
    <location>
        <begin position="176"/>
        <end position="184"/>
    </location>
</feature>
<feature type="strand" evidence="23">
    <location>
        <begin position="187"/>
        <end position="190"/>
    </location>
</feature>
<feature type="strand" evidence="23">
    <location>
        <begin position="196"/>
        <end position="199"/>
    </location>
</feature>
<feature type="strand" evidence="23">
    <location>
        <begin position="202"/>
        <end position="209"/>
    </location>
</feature>
<feature type="strand" evidence="25">
    <location>
        <begin position="211"/>
        <end position="213"/>
    </location>
</feature>
<feature type="strand" evidence="23">
    <location>
        <begin position="215"/>
        <end position="225"/>
    </location>
</feature>
<feature type="strand" evidence="23">
    <location>
        <begin position="229"/>
        <end position="232"/>
    </location>
</feature>
<feature type="turn" evidence="23">
    <location>
        <begin position="241"/>
        <end position="243"/>
    </location>
</feature>
<feature type="helix" evidence="23">
    <location>
        <begin position="248"/>
        <end position="253"/>
    </location>
</feature>
<feature type="strand" evidence="23">
    <location>
        <begin position="261"/>
        <end position="266"/>
    </location>
</feature>
<feature type="helix" evidence="23">
    <location>
        <begin position="267"/>
        <end position="275"/>
    </location>
</feature>
<feature type="strand" evidence="23">
    <location>
        <begin position="281"/>
        <end position="283"/>
    </location>
</feature>
<feature type="strand" evidence="24">
    <location>
        <begin position="285"/>
        <end position="288"/>
    </location>
</feature>
<feature type="helix" evidence="23">
    <location>
        <begin position="291"/>
        <end position="300"/>
    </location>
</feature>
<feature type="strand" evidence="23">
    <location>
        <begin position="302"/>
        <end position="311"/>
    </location>
</feature>
<feature type="helix" evidence="23">
    <location>
        <begin position="312"/>
        <end position="325"/>
    </location>
</feature>
<feature type="helix" evidence="23">
    <location>
        <begin position="326"/>
        <end position="328"/>
    </location>
</feature>
<feature type="strand" evidence="23">
    <location>
        <begin position="334"/>
        <end position="340"/>
    </location>
</feature>
<feature type="helix" evidence="23">
    <location>
        <begin position="346"/>
        <end position="362"/>
    </location>
</feature>
<feature type="helix" evidence="23">
    <location>
        <begin position="368"/>
        <end position="376"/>
    </location>
</feature>
<feature type="helix" evidence="23">
    <location>
        <begin position="377"/>
        <end position="379"/>
    </location>
</feature>
<feature type="helix" evidence="23">
    <location>
        <begin position="385"/>
        <end position="399"/>
    </location>
</feature>
<feature type="helix" evidence="23">
    <location>
        <begin position="405"/>
        <end position="419"/>
    </location>
</feature>
<feature type="helix" evidence="23">
    <location>
        <begin position="424"/>
        <end position="427"/>
    </location>
</feature>
<feature type="helix" evidence="28">
    <location>
        <begin position="450"/>
        <end position="460"/>
    </location>
</feature>
<feature type="helix" evidence="28">
    <location>
        <begin position="462"/>
        <end position="467"/>
    </location>
</feature>
<feature type="turn" evidence="27">
    <location>
        <begin position="472"/>
        <end position="474"/>
    </location>
</feature>
<feature type="helix" evidence="28">
    <location>
        <begin position="476"/>
        <end position="478"/>
    </location>
</feature>
<feature type="helix" evidence="28">
    <location>
        <begin position="482"/>
        <end position="494"/>
    </location>
</feature>
<feature type="helix" evidence="28">
    <location>
        <begin position="500"/>
        <end position="507"/>
    </location>
</feature>
<feature type="helix" evidence="26">
    <location>
        <begin position="510"/>
        <end position="512"/>
    </location>
</feature>
<feature type="helix" evidence="28">
    <location>
        <begin position="513"/>
        <end position="520"/>
    </location>
</feature>
<feature type="helix" evidence="29">
    <location>
        <begin position="523"/>
        <end position="525"/>
    </location>
</feature>
<feature type="helix" evidence="28">
    <location>
        <begin position="528"/>
        <end position="561"/>
    </location>
</feature>
<feature type="helix" evidence="28">
    <location>
        <begin position="565"/>
        <end position="580"/>
    </location>
</feature>
<organism>
    <name type="scientific">Escherichia coli (strain K12)</name>
    <dbReference type="NCBI Taxonomy" id="83333"/>
    <lineage>
        <taxon>Bacteria</taxon>
        <taxon>Pseudomonadati</taxon>
        <taxon>Pseudomonadota</taxon>
        <taxon>Gammaproteobacteria</taxon>
        <taxon>Enterobacterales</taxon>
        <taxon>Enterobacteriaceae</taxon>
        <taxon>Escherichia</taxon>
    </lineage>
</organism>
<protein>
    <recommendedName>
        <fullName evidence="1">DNA primase</fullName>
        <ecNumber evidence="1 4 9">2.7.7.101</ecNumber>
    </recommendedName>
</protein>
<sequence>MAGRIPRVFINDLLARTDIVDLIDARVKLKKQGKNFHACCPFHNEKTPSFTVNGEKQFYHCFGCGAHGNAIDFLMNYDKLEFVETVEELAAMHNLEVPFEAGSGPSQIERHQRQTLYQLMDGLNTFYQQSLQQPVATSARQYLEKRGLSHEVIARFAIGFAPPGWDNVLKRFGGNPENRQSLIDAGMLVTNDQGRSYDRFRERVMFPIRDKRGRVIGFGGRVLGNDTPKYLNSPETDIFHKGRQLYGLYEAQQDNAEPNRLLVVEGYMDVVALAQYGINYAVASLGTSTTADHIQLLFRATNNVICCYDGDRAGRDAAWRALETALPYMTDGRQLRFMFLPDGEDPDTLVRKEGKEAFEARMEQAMPLSAFLFNSLMPQVDLSTPDGRARLSTLALPLISQVPGETLRIYLRQELGNKLGILDDSQLERLMPKAAESGVSRPVPQLKRTTMRILIGLLVQNPELATLVPPLENLDENKLPGLGLFRELVNTCLSQPGLTTGQLLEHYRGTNNAATLEKLSMWDDIADKNIAEQTFTDSLNHMFDSLLELRQEELIARERTHGLSNEERLELWTLNQELAKK</sequence>
<comment type="function">
    <text evidence="1 4 9">RNA polymerase that catalyzes the synthesis of short RNA molecules used as primers for DNA polymerase during DNA replication.</text>
</comment>
<comment type="catalytic activity">
    <reaction evidence="1 4 9">
        <text>ssDNA + n NTP = ssDNA/pppN(pN)n-1 hybrid + (n-1) diphosphate.</text>
        <dbReference type="EC" id="2.7.7.101"/>
    </reaction>
</comment>
<comment type="cofactor">
    <cofactor evidence="1 4 11">
        <name>Zn(2+)</name>
        <dbReference type="ChEBI" id="CHEBI:29105"/>
    </cofactor>
    <text evidence="1 4 11">Binds 1 zinc ion per monomer.</text>
</comment>
<comment type="cofactor">
    <cofactor evidence="1">
        <name>Mg(2+)</name>
        <dbReference type="ChEBI" id="CHEBI:18420"/>
    </cofactor>
    <text evidence="1">Binds two Mg(2+) per subunit.</text>
</comment>
<comment type="activity regulation">
    <text evidence="6">Activity can be regulated by an intermolecular trans association between the zinc-binding domain and the catalytic core domain of two different primase molecules.</text>
</comment>
<comment type="subunit">
    <text evidence="1 3 4 5 7 9 10 12">Monomer. Interacts with DnaB. The primase-helicase complex is composed of up to three DnaG bound to one DnaB hexamer. Component of the replication restart primosome, which is composed of PriA, PriB, PriC, DnaB, DnaC, DnaG and DnaT (PubMed:6454139).</text>
</comment>
<comment type="interaction">
    <interactant intactId="EBI-549259">
        <id>P0ABS5</id>
    </interactant>
    <interactant intactId="EBI-548978">
        <id>P0ACB0</id>
        <label>dnaB</label>
    </interactant>
    <organismsDiffer>false</organismsDiffer>
    <experiments>3</experiments>
</comment>
<comment type="interaction">
    <interactant intactId="EBI-549259">
        <id>P0ABS5</id>
    </interactant>
    <interactant intactId="EBI-543771">
        <id>P0A7L0</id>
        <label>rplA</label>
    </interactant>
    <organismsDiffer>false</organismsDiffer>
    <experiments>2</experiments>
</comment>
<comment type="interaction">
    <interactant intactId="EBI-549259">
        <id>P0ABS5</id>
    </interactant>
    <interactant intactId="EBI-1118620">
        <id>P0AGE0</id>
        <label>ssb</label>
    </interactant>
    <organismsDiffer>false</organismsDiffer>
    <experiments>2</experiments>
</comment>
<comment type="domain">
    <text evidence="1 2 5 7">Contains an N-terminal zinc-binding domain, a central core domain that contains the primase activity, and a C-terminal DnaB-binding domain.</text>
</comment>
<comment type="similarity">
    <text evidence="1">Belongs to the DnaG primase family.</text>
</comment>
<comment type="sequence caution" evidence="13">
    <conflict type="frameshift">
        <sequence resource="EMBL-CDS" id="CAA23531"/>
    </conflict>
</comment>
<name>DNAG_ECOLI</name>
<reference key="1">
    <citation type="journal article" date="1983" name="Cell">
        <title>The operon that encodes the sigma subunit of RNA polymerase also encodes ribosomal protein S21 and DNA primase in E. coli K12.</title>
        <authorList>
            <person name="Burton Z.F."/>
            <person name="Gross C.A."/>
            <person name="Watanabe K.K."/>
            <person name="Burgess R.R."/>
        </authorList>
    </citation>
    <scope>NUCLEOTIDE SEQUENCE [GENOMIC DNA]</scope>
</reference>
<reference key="2">
    <citation type="journal article" date="1982" name="Proc. Natl. Acad. Sci. U.S.A.">
        <title>Sequences of the Escherichia coli dnaG primase gene and regulation of its expression.</title>
        <authorList>
            <person name="Smiley B.L."/>
            <person name="Lupski J.R."/>
            <person name="Svec P.S."/>
            <person name="McMacken R."/>
            <person name="Godson G.N."/>
        </authorList>
    </citation>
    <scope>NUCLEOTIDE SEQUENCE [GENOMIC DNA]</scope>
</reference>
<reference key="3">
    <citation type="journal article" date="1997" name="Science">
        <title>The complete genome sequence of Escherichia coli K-12.</title>
        <authorList>
            <person name="Blattner F.R."/>
            <person name="Plunkett G. III"/>
            <person name="Bloch C.A."/>
            <person name="Perna N.T."/>
            <person name="Burland V."/>
            <person name="Riley M."/>
            <person name="Collado-Vides J."/>
            <person name="Glasner J.D."/>
            <person name="Rode C.K."/>
            <person name="Mayhew G.F."/>
            <person name="Gregor J."/>
            <person name="Davis N.W."/>
            <person name="Kirkpatrick H.A."/>
            <person name="Goeden M.A."/>
            <person name="Rose D.J."/>
            <person name="Mau B."/>
            <person name="Shao Y."/>
        </authorList>
    </citation>
    <scope>NUCLEOTIDE SEQUENCE [LARGE SCALE GENOMIC DNA]</scope>
    <source>
        <strain>K12 / MG1655 / ATCC 47076</strain>
    </source>
</reference>
<reference key="4">
    <citation type="journal article" date="2006" name="Mol. Syst. Biol.">
        <title>Highly accurate genome sequences of Escherichia coli K-12 strains MG1655 and W3110.</title>
        <authorList>
            <person name="Hayashi K."/>
            <person name="Morooka N."/>
            <person name="Yamamoto Y."/>
            <person name="Fujita K."/>
            <person name="Isono K."/>
            <person name="Choi S."/>
            <person name="Ohtsubo E."/>
            <person name="Baba T."/>
            <person name="Wanner B.L."/>
            <person name="Mori H."/>
            <person name="Horiuchi T."/>
        </authorList>
    </citation>
    <scope>NUCLEOTIDE SEQUENCE [LARGE SCALE GENOMIC DNA]</scope>
    <source>
        <strain>K12 / W3110 / ATCC 27325 / DSM 5911</strain>
    </source>
</reference>
<reference key="5">
    <citation type="journal article" date="1983" name="Mol. Gen. Genet.">
        <title>Regulation of the rpsU-dnaG-rpoD macromolecular synthesis operon and the initiation of DNA replication in Escherichia coli K-12.</title>
        <authorList>
            <person name="Lupski J.R."/>
            <person name="Smiley B.L."/>
            <person name="Godson G.N."/>
        </authorList>
    </citation>
    <scope>NUCLEOTIDE SEQUENCE [GENOMIC DNA] OF 1-81</scope>
    <source>
        <strain>K12</strain>
    </source>
</reference>
<reference key="6">
    <citation type="journal article" date="1978" name="J. Biol. Chem.">
        <title>Primase, the dnaG protein of Escherichia coli. An enzyme which starts DNA chains.</title>
        <authorList>
            <person name="Rowen L."/>
            <person name="Kornberg A."/>
        </authorList>
    </citation>
    <scope>FUNCTION</scope>
    <scope>CATALYTIC ACTIVITY</scope>
    <scope>SUBUNIT</scope>
</reference>
<reference key="7">
    <citation type="journal article" date="1981" name="Proc. Natl. Acad. Sci. U.S.A.">
        <title>Unique primed start of phage phi X174 DNA replication and mobility of the primosome in a direction opposite chain synthesis.</title>
        <authorList>
            <person name="Arai K."/>
            <person name="Kornberg A."/>
        </authorList>
    </citation>
    <scope>FUNCTION</scope>
    <scope>PRIMOSOME SUBUNITS</scope>
</reference>
<reference key="8">
    <citation type="journal article" date="1992" name="Biochim. Biophys. Acta">
        <title>Enriched sources of Escherichia coli replication proteins. The dnaG primase is a zinc metalloprotein.</title>
        <authorList>
            <person name="Stamford N.P.J."/>
            <person name="Lilley P.E."/>
            <person name="Dixon N.E."/>
        </authorList>
    </citation>
    <scope>FUNCTION</scope>
    <scope>CATALYTIC ACTIVITY</scope>
    <scope>COFACTOR</scope>
    <scope>SUBUNIT</scope>
    <scope>ZINC-BINDING</scope>
</reference>
<reference key="9">
    <citation type="journal article" date="1996" name="Biochemistry">
        <title>The role of zinc and the reactivity of cysteines in Escherichia coli primase.</title>
        <authorList>
            <person name="Griep M.A."/>
            <person name="Lokey E.R."/>
        </authorList>
    </citation>
    <scope>COFACTOR</scope>
    <scope>ZINC-BINDING</scope>
</reference>
<reference key="10">
    <citation type="journal article" date="1996" name="Proc. Natl. Acad. Sci. U.S.A.">
        <title>Direct physical interaction between DnaG primase and DnaB helicase of Escherichia coli is necessary for optimal synthesis of primer RNA.</title>
        <authorList>
            <person name="Lu Y.B."/>
            <person name="Ratnakar P.V."/>
            <person name="Mohanty B.K."/>
            <person name="Bastia D."/>
        </authorList>
    </citation>
    <scope>INTERACTION WITH DNAB</scope>
    <scope>MUTAGENESIS OF GLN-576</scope>
</reference>
<reference key="11">
    <citation type="journal article" date="1997" name="Electrophoresis">
        <title>Escherichia coli proteome analysis using the gene-protein database.</title>
        <authorList>
            <person name="VanBogelen R.A."/>
            <person name="Abshire K.Z."/>
            <person name="Moldover B."/>
            <person name="Olson E.R."/>
            <person name="Neidhardt F.C."/>
        </authorList>
    </citation>
    <scope>IDENTIFICATION BY 2D-GEL</scope>
</reference>
<reference key="12">
    <citation type="journal article" date="2003" name="J. Biol. Chem.">
        <title>Mechanism and stoichiometry of interaction of DnaG primase with DnaB helicase of Escherichia coli in RNA primer synthesis.</title>
        <authorList>
            <person name="Mitkova A.V."/>
            <person name="Khopde S.M."/>
            <person name="Biswas S.B."/>
        </authorList>
    </citation>
    <scope>SUBUNIT</scope>
    <scope>INTERACTION WITH DNAB</scope>
</reference>
<reference key="13">
    <citation type="journal article" date="2005" name="Mol. Cell">
        <title>Crosstalk between primase subunits can act to regulate primer synthesis in trans.</title>
        <authorList>
            <person name="Corn J.E."/>
            <person name="Pease P.J."/>
            <person name="Hura G.L."/>
            <person name="Berger J.M."/>
        </authorList>
    </citation>
    <scope>ACTIVITY REGULATION</scope>
</reference>
<reference evidence="16" key="14">
    <citation type="journal article" date="2000" name="J. Mol. Biol.">
        <title>A TOPRIM domain in the crystal structure of the catalytic core of Escherichia coli primase confirms a structural link to DNA topoisomerases.</title>
        <authorList>
            <person name="Podobnik M."/>
            <person name="McInerney P."/>
            <person name="O'Donnell M."/>
            <person name="Kuriyan J."/>
        </authorList>
    </citation>
    <scope>X-RAY CRYSTALLOGRAPHY (2.9 ANGSTROMS) OF 109-429</scope>
</reference>
<reference evidence="14 15" key="15">
    <citation type="journal article" date="2000" name="Science">
        <title>Structure of the RNA polymerase domain of E. coli primase.</title>
        <authorList>
            <person name="Keck J.L."/>
            <person name="Roche D.D."/>
            <person name="Lynch A.S."/>
            <person name="Berger J.M."/>
        </authorList>
    </citation>
    <scope>X-RAY CRYSTALLOGRAPHY (1.60 ANGSTROMS) OF 111-433</scope>
    <scope>DOMAIN</scope>
</reference>
<reference evidence="17" key="16">
    <citation type="journal article" date="2005" name="J. Biol. Chem.">
        <title>Crystal and solution structures of the helicase-binding domain of Escherichia coli primase.</title>
        <authorList>
            <person name="Oakley A.J."/>
            <person name="Loscha K.V."/>
            <person name="Schaeffer P.M."/>
            <person name="Liepinsh E."/>
            <person name="Pintacuda G."/>
            <person name="Wilce M.C."/>
            <person name="Otting G."/>
            <person name="Dixon N.E."/>
        </authorList>
    </citation>
    <scope>X-RAY CRYSTALLOGRAPHY (2.80 ANGSTROMS) OF 434-581</scope>
    <scope>INTERACTION WITH DNAB</scope>
    <scope>DOMAIN</scope>
</reference>
<reference evidence="18" key="17">
    <citation type="journal article" date="2006" name="FEBS J.">
        <title>Monomeric solution structure of the helicase-binding domain of Escherichia coli DnaG primase.</title>
        <authorList>
            <person name="Su X.C."/>
            <person name="Schaeffer P.M."/>
            <person name="Loscha K.V."/>
            <person name="Gan P.H."/>
            <person name="Dixon N.E."/>
            <person name="Otting G."/>
        </authorList>
    </citation>
    <scope>STRUCTURE BY NMR OF 434-581</scope>
    <scope>SUBUNIT</scope>
    <scope>DOMAIN</scope>
</reference>
<reference evidence="19" key="18">
    <citation type="journal article" date="2008" name="Nat. Struct. Mol. Biol.">
        <title>Identification of a DNA primase template tracking site redefines the geometry of primer synthesis.</title>
        <authorList>
            <person name="Corn J.E."/>
            <person name="Pelton J.G."/>
            <person name="Berger J.M."/>
        </authorList>
    </citation>
    <scope>X-RAY CRYSTALLOGRAPHY (2.35 ANGSTROMS) OF 111-429</scope>
    <scope>DNA-BINDING</scope>
    <scope>MUTAGENESIS OF TRP-165; ARG-199 AND ARG-201</scope>
</reference>
<reference evidence="20 21 22" key="19">
    <citation type="submission" date="2018-02" db="PDB data bank">
        <title>DnaG primase C-terminal domain complex with SSB C-terminal peptide.</title>
        <authorList>
            <person name="Oakley A.J."/>
            <person name="Lo A.T.Y."/>
        </authorList>
    </citation>
    <scope>X-RAY CRYSTALLOGRAPHY (1.50 ANGSTROMS) OF 434-581</scope>
</reference>
<dbReference type="EC" id="2.7.7.101" evidence="1 4 9"/>
<dbReference type="EMBL" id="J01687">
    <property type="protein sequence ID" value="AAA24600.1"/>
    <property type="molecule type" value="Genomic_DNA"/>
</dbReference>
<dbReference type="EMBL" id="V00274">
    <property type="protein sequence ID" value="CAA23531.1"/>
    <property type="status" value="ALT_FRAME"/>
    <property type="molecule type" value="Genomic_DNA"/>
</dbReference>
<dbReference type="EMBL" id="U28379">
    <property type="protein sequence ID" value="AAA89146.1"/>
    <property type="molecule type" value="Genomic_DNA"/>
</dbReference>
<dbReference type="EMBL" id="U00096">
    <property type="protein sequence ID" value="AAC76102.1"/>
    <property type="molecule type" value="Genomic_DNA"/>
</dbReference>
<dbReference type="EMBL" id="AP009048">
    <property type="protein sequence ID" value="BAE77117.1"/>
    <property type="molecule type" value="Genomic_DNA"/>
</dbReference>
<dbReference type="EMBL" id="V00346">
    <property type="protein sequence ID" value="CAA23636.1"/>
    <property type="molecule type" value="Genomic_DNA"/>
</dbReference>
<dbReference type="PIR" id="A03423">
    <property type="entry name" value="RYEC2"/>
</dbReference>
<dbReference type="RefSeq" id="NP_417538.1">
    <property type="nucleotide sequence ID" value="NC_000913.3"/>
</dbReference>
<dbReference type="RefSeq" id="WP_000918827.1">
    <property type="nucleotide sequence ID" value="NZ_STEB01000001.1"/>
</dbReference>
<dbReference type="PDB" id="1DD9">
    <property type="method" value="X-ray"/>
    <property type="resolution" value="1.60 A"/>
    <property type="chains" value="A=111-433"/>
</dbReference>
<dbReference type="PDB" id="1DDE">
    <property type="method" value="X-ray"/>
    <property type="resolution" value="1.70 A"/>
    <property type="chains" value="A=111-433"/>
</dbReference>
<dbReference type="PDB" id="1EQN">
    <property type="method" value="X-ray"/>
    <property type="resolution" value="2.90 A"/>
    <property type="chains" value="A/B/C/D/E=111-429"/>
</dbReference>
<dbReference type="PDB" id="1T3W">
    <property type="method" value="X-ray"/>
    <property type="resolution" value="2.80 A"/>
    <property type="chains" value="A/B=434-581"/>
</dbReference>
<dbReference type="PDB" id="2HAJ">
    <property type="method" value="NMR"/>
    <property type="chains" value="A=434-581"/>
</dbReference>
<dbReference type="PDB" id="3B39">
    <property type="method" value="X-ray"/>
    <property type="resolution" value="2.35 A"/>
    <property type="chains" value="A/B=111-429"/>
</dbReference>
<dbReference type="PDB" id="6CBR">
    <property type="method" value="X-ray"/>
    <property type="resolution" value="1.50 A"/>
    <property type="chains" value="A/B=434-581"/>
</dbReference>
<dbReference type="PDB" id="6CBS">
    <property type="method" value="X-ray"/>
    <property type="resolution" value="1.85 A"/>
    <property type="chains" value="A/B=434-581"/>
</dbReference>
<dbReference type="PDB" id="6CBT">
    <property type="method" value="X-ray"/>
    <property type="resolution" value="2.10 A"/>
    <property type="chains" value="A/B=434-581"/>
</dbReference>
<dbReference type="PDB" id="7T22">
    <property type="method" value="EM"/>
    <property type="resolution" value="4.20 A"/>
    <property type="chains" value="G/H/I=449-581"/>
</dbReference>
<dbReference type="PDB" id="9ECO">
    <property type="method" value="EM"/>
    <property type="resolution" value="4.20 A"/>
    <property type="chains" value="G/H=449-581"/>
</dbReference>
<dbReference type="PDBsum" id="1DD9"/>
<dbReference type="PDBsum" id="1DDE"/>
<dbReference type="PDBsum" id="1EQN"/>
<dbReference type="PDBsum" id="1T3W"/>
<dbReference type="PDBsum" id="2HAJ"/>
<dbReference type="PDBsum" id="3B39"/>
<dbReference type="PDBsum" id="6CBR"/>
<dbReference type="PDBsum" id="6CBS"/>
<dbReference type="PDBsum" id="6CBT"/>
<dbReference type="PDBsum" id="7T22"/>
<dbReference type="PDBsum" id="9ECO"/>
<dbReference type="BMRB" id="P0ABS5"/>
<dbReference type="EMDB" id="EMD-25609"/>
<dbReference type="EMDB" id="EMD-25610"/>
<dbReference type="EMDB" id="EMD-47923"/>
<dbReference type="SMR" id="P0ABS5"/>
<dbReference type="BioGRID" id="4262146">
    <property type="interactions" value="239"/>
</dbReference>
<dbReference type="BioGRID" id="851886">
    <property type="interactions" value="1"/>
</dbReference>
<dbReference type="ComplexPortal" id="CPX-1933">
    <property type="entry name" value="DnaB-DnaG primase-helicase complex"/>
</dbReference>
<dbReference type="ComplexPortal" id="CPX-5909">
    <property type="entry name" value="Replication restart primosome complex, priAC variant"/>
</dbReference>
<dbReference type="ComplexPortal" id="CPX-5910">
    <property type="entry name" value="Replication restart primosome complex, priAB variant"/>
</dbReference>
<dbReference type="ComplexPortal" id="CPX-5911">
    <property type="entry name" value="Replication restart primosome complex, priC-rep variant"/>
</dbReference>
<dbReference type="DIP" id="DIP-47954N"/>
<dbReference type="FunCoup" id="P0ABS5">
    <property type="interactions" value="350"/>
</dbReference>
<dbReference type="IntAct" id="P0ABS5">
    <property type="interactions" value="17"/>
</dbReference>
<dbReference type="STRING" id="511145.b3066"/>
<dbReference type="jPOST" id="P0ABS5"/>
<dbReference type="PaxDb" id="511145-b3066"/>
<dbReference type="EnsemblBacteria" id="AAC76102">
    <property type="protein sequence ID" value="AAC76102"/>
    <property type="gene ID" value="b3066"/>
</dbReference>
<dbReference type="GeneID" id="93778927"/>
<dbReference type="GeneID" id="947570"/>
<dbReference type="KEGG" id="ecj:JW3038"/>
<dbReference type="KEGG" id="eco:b3066"/>
<dbReference type="KEGG" id="ecoc:C3026_16750"/>
<dbReference type="PATRIC" id="fig|1411691.4.peg.3664"/>
<dbReference type="EchoBASE" id="EB0235"/>
<dbReference type="eggNOG" id="COG0358">
    <property type="taxonomic scope" value="Bacteria"/>
</dbReference>
<dbReference type="HOGENOM" id="CLU_013501_5_4_6"/>
<dbReference type="InParanoid" id="P0ABS5"/>
<dbReference type="OMA" id="LMWPIRD"/>
<dbReference type="OrthoDB" id="9803773at2"/>
<dbReference type="PhylomeDB" id="P0ABS5"/>
<dbReference type="BioCyc" id="EcoCyc:EG10239-MONOMER"/>
<dbReference type="BioCyc" id="MetaCyc:EG10239-MONOMER"/>
<dbReference type="BRENDA" id="2.7.7.101">
    <property type="organism ID" value="2026"/>
</dbReference>
<dbReference type="EvolutionaryTrace" id="P0ABS5"/>
<dbReference type="PRO" id="PR:P0ABS5"/>
<dbReference type="Proteomes" id="UP000000625">
    <property type="component" value="Chromosome"/>
</dbReference>
<dbReference type="GO" id="GO:0005737">
    <property type="term" value="C:cytoplasm"/>
    <property type="evidence" value="ECO:0000314"/>
    <property type="project" value="EcoliWiki"/>
</dbReference>
<dbReference type="GO" id="GO:0000428">
    <property type="term" value="C:DNA-directed RNA polymerase complex"/>
    <property type="evidence" value="ECO:0007669"/>
    <property type="project" value="UniProtKB-KW"/>
</dbReference>
<dbReference type="GO" id="GO:1990156">
    <property type="term" value="C:DnaB-DnaG complex"/>
    <property type="evidence" value="ECO:0000353"/>
    <property type="project" value="ComplexPortal"/>
</dbReference>
<dbReference type="GO" id="GO:1990077">
    <property type="term" value="C:primosome complex"/>
    <property type="evidence" value="ECO:0000303"/>
    <property type="project" value="ComplexPortal"/>
</dbReference>
<dbReference type="GO" id="GO:0030894">
    <property type="term" value="C:replisome"/>
    <property type="evidence" value="ECO:0000303"/>
    <property type="project" value="ComplexPortal"/>
</dbReference>
<dbReference type="GO" id="GO:0003677">
    <property type="term" value="F:DNA binding"/>
    <property type="evidence" value="ECO:0007669"/>
    <property type="project" value="UniProtKB-KW"/>
</dbReference>
<dbReference type="GO" id="GO:0003899">
    <property type="term" value="F:DNA-directed RNA polymerase activity"/>
    <property type="evidence" value="ECO:0007669"/>
    <property type="project" value="InterPro"/>
</dbReference>
<dbReference type="GO" id="GO:0008270">
    <property type="term" value="F:zinc ion binding"/>
    <property type="evidence" value="ECO:0000314"/>
    <property type="project" value="EcoliWiki"/>
</dbReference>
<dbReference type="GO" id="GO:0006269">
    <property type="term" value="P:DNA replication, synthesis of primer"/>
    <property type="evidence" value="ECO:0000314"/>
    <property type="project" value="ComplexPortal"/>
</dbReference>
<dbReference type="GO" id="GO:0031297">
    <property type="term" value="P:replication fork processing"/>
    <property type="evidence" value="ECO:0000303"/>
    <property type="project" value="ComplexPortal"/>
</dbReference>
<dbReference type="CDD" id="cd03364">
    <property type="entry name" value="TOPRIM_DnaG_primases"/>
    <property type="match status" value="1"/>
</dbReference>
<dbReference type="DisProt" id="DP02134"/>
<dbReference type="FunFam" id="1.10.860.10:FF:000003">
    <property type="entry name" value="DNA primase"/>
    <property type="match status" value="1"/>
</dbReference>
<dbReference type="FunFam" id="1.20.50.20:FF:000001">
    <property type="entry name" value="DNA primase"/>
    <property type="match status" value="1"/>
</dbReference>
<dbReference type="FunFam" id="3.40.1360.10:FF:000002">
    <property type="entry name" value="DNA primase"/>
    <property type="match status" value="1"/>
</dbReference>
<dbReference type="FunFam" id="3.90.580.10:FF:000001">
    <property type="entry name" value="DNA primase"/>
    <property type="match status" value="1"/>
</dbReference>
<dbReference type="FunFam" id="3.90.980.10:FF:000001">
    <property type="entry name" value="DNA primase"/>
    <property type="match status" value="1"/>
</dbReference>
<dbReference type="Gene3D" id="3.40.1360.10">
    <property type="match status" value="1"/>
</dbReference>
<dbReference type="Gene3D" id="3.90.980.10">
    <property type="entry name" value="DNA primase, catalytic core, N-terminal domain"/>
    <property type="match status" value="1"/>
</dbReference>
<dbReference type="Gene3D" id="1.10.860.10">
    <property type="entry name" value="DNAb Helicase, Chain A"/>
    <property type="match status" value="1"/>
</dbReference>
<dbReference type="Gene3D" id="1.20.50.20">
    <property type="entry name" value="DnaG, RNA polymerase domain, helical bundle"/>
    <property type="match status" value="1"/>
</dbReference>
<dbReference type="Gene3D" id="3.90.580.10">
    <property type="entry name" value="Zinc finger, CHC2-type domain"/>
    <property type="match status" value="1"/>
</dbReference>
<dbReference type="HAMAP" id="MF_00974">
    <property type="entry name" value="DNA_primase_DnaG"/>
    <property type="match status" value="1"/>
</dbReference>
<dbReference type="InterPro" id="IPR016136">
    <property type="entry name" value="DNA_helicase_N/primase_C"/>
</dbReference>
<dbReference type="InterPro" id="IPR037068">
    <property type="entry name" value="DNA_primase_core_N_sf"/>
</dbReference>
<dbReference type="InterPro" id="IPR019475">
    <property type="entry name" value="DNA_primase_DnaB-bd"/>
</dbReference>
<dbReference type="InterPro" id="IPR006295">
    <property type="entry name" value="DNA_primase_DnaG"/>
</dbReference>
<dbReference type="InterPro" id="IPR013173">
    <property type="entry name" value="DNA_primase_DnaG_DnaB-bd_dom"/>
</dbReference>
<dbReference type="InterPro" id="IPR036977">
    <property type="entry name" value="DNA_primase_Znf_CHC2"/>
</dbReference>
<dbReference type="InterPro" id="IPR030846">
    <property type="entry name" value="DnaG_bac"/>
</dbReference>
<dbReference type="InterPro" id="IPR013264">
    <property type="entry name" value="DNAG_N"/>
</dbReference>
<dbReference type="InterPro" id="IPR050219">
    <property type="entry name" value="DnaG_primase"/>
</dbReference>
<dbReference type="InterPro" id="IPR034151">
    <property type="entry name" value="TOPRIM_DnaG_bac"/>
</dbReference>
<dbReference type="InterPro" id="IPR006171">
    <property type="entry name" value="TOPRIM_dom"/>
</dbReference>
<dbReference type="InterPro" id="IPR002694">
    <property type="entry name" value="Znf_CHC2"/>
</dbReference>
<dbReference type="NCBIfam" id="TIGR01391">
    <property type="entry name" value="dnaG"/>
    <property type="match status" value="1"/>
</dbReference>
<dbReference type="PANTHER" id="PTHR30313">
    <property type="entry name" value="DNA PRIMASE"/>
    <property type="match status" value="1"/>
</dbReference>
<dbReference type="PANTHER" id="PTHR30313:SF2">
    <property type="entry name" value="DNA PRIMASE"/>
    <property type="match status" value="1"/>
</dbReference>
<dbReference type="Pfam" id="PF10410">
    <property type="entry name" value="DnaB_bind"/>
    <property type="match status" value="1"/>
</dbReference>
<dbReference type="Pfam" id="PF08278">
    <property type="entry name" value="DnaG_DnaB_bind"/>
    <property type="match status" value="1"/>
</dbReference>
<dbReference type="Pfam" id="PF08275">
    <property type="entry name" value="DNAG_N"/>
    <property type="match status" value="1"/>
</dbReference>
<dbReference type="Pfam" id="PF13155">
    <property type="entry name" value="Toprim_2"/>
    <property type="match status" value="1"/>
</dbReference>
<dbReference type="Pfam" id="PF01807">
    <property type="entry name" value="Zn_ribbon_DnaG"/>
    <property type="match status" value="1"/>
</dbReference>
<dbReference type="PIRSF" id="PIRSF002811">
    <property type="entry name" value="DnaG"/>
    <property type="match status" value="1"/>
</dbReference>
<dbReference type="SMART" id="SM00766">
    <property type="entry name" value="DnaG_DnaB_bind"/>
    <property type="match status" value="1"/>
</dbReference>
<dbReference type="SMART" id="SM00493">
    <property type="entry name" value="TOPRIM"/>
    <property type="match status" value="1"/>
</dbReference>
<dbReference type="SMART" id="SM00400">
    <property type="entry name" value="ZnF_CHCC"/>
    <property type="match status" value="1"/>
</dbReference>
<dbReference type="SUPFAM" id="SSF56731">
    <property type="entry name" value="DNA primase core"/>
    <property type="match status" value="1"/>
</dbReference>
<dbReference type="SUPFAM" id="SSF117023">
    <property type="entry name" value="DNA primase DnaG, C-terminal domain"/>
    <property type="match status" value="1"/>
</dbReference>
<dbReference type="SUPFAM" id="SSF57783">
    <property type="entry name" value="Zinc beta-ribbon"/>
    <property type="match status" value="1"/>
</dbReference>
<dbReference type="PROSITE" id="PS50880">
    <property type="entry name" value="TOPRIM"/>
    <property type="match status" value="1"/>
</dbReference>
<keyword id="KW-0002">3D-structure</keyword>
<keyword id="KW-0235">DNA replication</keyword>
<keyword id="KW-0238">DNA-binding</keyword>
<keyword id="KW-0240">DNA-directed RNA polymerase</keyword>
<keyword id="KW-0460">Magnesium</keyword>
<keyword id="KW-0479">Metal-binding</keyword>
<keyword id="KW-0548">Nucleotidyltransferase</keyword>
<keyword id="KW-0639">Primosome</keyword>
<keyword id="KW-1185">Reference proteome</keyword>
<keyword id="KW-0804">Transcription</keyword>
<keyword id="KW-0808">Transferase</keyword>
<keyword id="KW-0862">Zinc</keyword>
<keyword id="KW-0863">Zinc-finger</keyword>
<proteinExistence type="evidence at protein level"/>